<evidence type="ECO:0000255" key="1">
    <source>
        <dbReference type="HAMAP-Rule" id="MF_01345"/>
    </source>
</evidence>
<evidence type="ECO:0000305" key="2"/>
<name>RS17_CORU7</name>
<protein>
    <recommendedName>
        <fullName evidence="1">Small ribosomal subunit protein uS17</fullName>
    </recommendedName>
    <alternativeName>
        <fullName evidence="2">30S ribosomal protein S17</fullName>
    </alternativeName>
</protein>
<feature type="chain" id="PRO_1000143244" description="Small ribosomal subunit protein uS17">
    <location>
        <begin position="1"/>
        <end position="92"/>
    </location>
</feature>
<comment type="function">
    <text evidence="1">One of the primary rRNA binding proteins, it binds specifically to the 5'-end of 16S ribosomal RNA.</text>
</comment>
<comment type="subunit">
    <text evidence="1">Part of the 30S ribosomal subunit.</text>
</comment>
<comment type="similarity">
    <text evidence="1">Belongs to the universal ribosomal protein uS17 family.</text>
</comment>
<organism>
    <name type="scientific">Corynebacterium urealyticum (strain ATCC 43042 / DSM 7109)</name>
    <dbReference type="NCBI Taxonomy" id="504474"/>
    <lineage>
        <taxon>Bacteria</taxon>
        <taxon>Bacillati</taxon>
        <taxon>Actinomycetota</taxon>
        <taxon>Actinomycetes</taxon>
        <taxon>Mycobacteriales</taxon>
        <taxon>Corynebacteriaceae</taxon>
        <taxon>Corynebacterium</taxon>
    </lineage>
</organism>
<reference key="1">
    <citation type="journal article" date="2008" name="J. Biotechnol.">
        <title>The lifestyle of Corynebacterium urealyticum derived from its complete genome sequence established by pyrosequencing.</title>
        <authorList>
            <person name="Tauch A."/>
            <person name="Trost E."/>
            <person name="Tilker A."/>
            <person name="Ludewig U."/>
            <person name="Schneiker S."/>
            <person name="Goesmann A."/>
            <person name="Arnold W."/>
            <person name="Bekel T."/>
            <person name="Brinkrolf K."/>
            <person name="Brune I."/>
            <person name="Goetker S."/>
            <person name="Kalinowski J."/>
            <person name="Kamp P.-B."/>
            <person name="Lobo F.P."/>
            <person name="Viehoever P."/>
            <person name="Weisshaar B."/>
            <person name="Soriano F."/>
            <person name="Droege M."/>
            <person name="Puehler A."/>
        </authorList>
    </citation>
    <scope>NUCLEOTIDE SEQUENCE [LARGE SCALE GENOMIC DNA]</scope>
    <source>
        <strain>ATCC 43042 / DSM 7109</strain>
    </source>
</reference>
<accession>B1VEU5</accession>
<gene>
    <name evidence="1" type="primary">rpsQ</name>
    <name type="ordered locus">cu0324</name>
</gene>
<proteinExistence type="inferred from homology"/>
<keyword id="KW-1185">Reference proteome</keyword>
<keyword id="KW-0687">Ribonucleoprotein</keyword>
<keyword id="KW-0689">Ribosomal protein</keyword>
<keyword id="KW-0694">RNA-binding</keyword>
<keyword id="KW-0699">rRNA-binding</keyword>
<sequence>MSEANVNKKEKGQKKVRTGYVVSDKMAKTIVVELEDRKQHALYGKIMRRNSRVKAHDEEGLAGVGDRVRIEETRPLSKDKHFRLLDIVEKAR</sequence>
<dbReference type="EMBL" id="AM942444">
    <property type="protein sequence ID" value="CAQ04284.1"/>
    <property type="molecule type" value="Genomic_DNA"/>
</dbReference>
<dbReference type="RefSeq" id="WP_012359584.1">
    <property type="nucleotide sequence ID" value="NC_010545.1"/>
</dbReference>
<dbReference type="SMR" id="B1VEU5"/>
<dbReference type="STRING" id="504474.cu0324"/>
<dbReference type="GeneID" id="60605127"/>
<dbReference type="KEGG" id="cur:cu0324"/>
<dbReference type="eggNOG" id="COG0186">
    <property type="taxonomic scope" value="Bacteria"/>
</dbReference>
<dbReference type="HOGENOM" id="CLU_073626_1_0_11"/>
<dbReference type="Proteomes" id="UP000001727">
    <property type="component" value="Chromosome"/>
</dbReference>
<dbReference type="GO" id="GO:0022627">
    <property type="term" value="C:cytosolic small ribosomal subunit"/>
    <property type="evidence" value="ECO:0007669"/>
    <property type="project" value="TreeGrafter"/>
</dbReference>
<dbReference type="GO" id="GO:0019843">
    <property type="term" value="F:rRNA binding"/>
    <property type="evidence" value="ECO:0007669"/>
    <property type="project" value="UniProtKB-UniRule"/>
</dbReference>
<dbReference type="GO" id="GO:0003735">
    <property type="term" value="F:structural constituent of ribosome"/>
    <property type="evidence" value="ECO:0007669"/>
    <property type="project" value="InterPro"/>
</dbReference>
<dbReference type="GO" id="GO:0006412">
    <property type="term" value="P:translation"/>
    <property type="evidence" value="ECO:0007669"/>
    <property type="project" value="UniProtKB-UniRule"/>
</dbReference>
<dbReference type="CDD" id="cd00364">
    <property type="entry name" value="Ribosomal_uS17"/>
    <property type="match status" value="1"/>
</dbReference>
<dbReference type="Gene3D" id="2.40.50.140">
    <property type="entry name" value="Nucleic acid-binding proteins"/>
    <property type="match status" value="1"/>
</dbReference>
<dbReference type="HAMAP" id="MF_01345_B">
    <property type="entry name" value="Ribosomal_uS17_B"/>
    <property type="match status" value="1"/>
</dbReference>
<dbReference type="InterPro" id="IPR012340">
    <property type="entry name" value="NA-bd_OB-fold"/>
</dbReference>
<dbReference type="InterPro" id="IPR000266">
    <property type="entry name" value="Ribosomal_uS17"/>
</dbReference>
<dbReference type="InterPro" id="IPR019984">
    <property type="entry name" value="Ribosomal_uS17_bact/chlr"/>
</dbReference>
<dbReference type="InterPro" id="IPR019979">
    <property type="entry name" value="Ribosomal_uS17_CS"/>
</dbReference>
<dbReference type="NCBIfam" id="NF004123">
    <property type="entry name" value="PRK05610.1"/>
    <property type="match status" value="1"/>
</dbReference>
<dbReference type="NCBIfam" id="TIGR03635">
    <property type="entry name" value="uS17_bact"/>
    <property type="match status" value="1"/>
</dbReference>
<dbReference type="PANTHER" id="PTHR10744">
    <property type="entry name" value="40S RIBOSOMAL PROTEIN S11 FAMILY MEMBER"/>
    <property type="match status" value="1"/>
</dbReference>
<dbReference type="PANTHER" id="PTHR10744:SF1">
    <property type="entry name" value="SMALL RIBOSOMAL SUBUNIT PROTEIN US17M"/>
    <property type="match status" value="1"/>
</dbReference>
<dbReference type="Pfam" id="PF00366">
    <property type="entry name" value="Ribosomal_S17"/>
    <property type="match status" value="1"/>
</dbReference>
<dbReference type="PRINTS" id="PR00973">
    <property type="entry name" value="RIBOSOMALS17"/>
</dbReference>
<dbReference type="SUPFAM" id="SSF50249">
    <property type="entry name" value="Nucleic acid-binding proteins"/>
    <property type="match status" value="1"/>
</dbReference>
<dbReference type="PROSITE" id="PS00056">
    <property type="entry name" value="RIBOSOMAL_S17"/>
    <property type="match status" value="1"/>
</dbReference>